<feature type="chain" id="PRO_1000138596" description="Alanine racemase">
    <location>
        <begin position="1"/>
        <end position="349"/>
    </location>
</feature>
<feature type="active site" description="Proton acceptor; specific for D-alanine" evidence="1">
    <location>
        <position position="35"/>
    </location>
</feature>
<feature type="active site" description="Proton acceptor; specific for L-alanine" evidence="1">
    <location>
        <position position="244"/>
    </location>
</feature>
<feature type="binding site" evidence="1">
    <location>
        <position position="130"/>
    </location>
    <ligand>
        <name>substrate</name>
    </ligand>
</feature>
<feature type="binding site" evidence="1">
    <location>
        <position position="292"/>
    </location>
    <ligand>
        <name>substrate</name>
    </ligand>
</feature>
<feature type="modified residue" description="N6-(pyridoxal phosphate)lysine" evidence="1">
    <location>
        <position position="35"/>
    </location>
</feature>
<organism>
    <name type="scientific">Dinoroseobacter shibae (strain DSM 16493 / NCIMB 14021 / DFL 12)</name>
    <dbReference type="NCBI Taxonomy" id="398580"/>
    <lineage>
        <taxon>Bacteria</taxon>
        <taxon>Pseudomonadati</taxon>
        <taxon>Pseudomonadota</taxon>
        <taxon>Alphaproteobacteria</taxon>
        <taxon>Rhodobacterales</taxon>
        <taxon>Roseobacteraceae</taxon>
        <taxon>Dinoroseobacter</taxon>
    </lineage>
</organism>
<name>ALR_DINSH</name>
<sequence length="349" mass="36244">MATATLSIDLDAIAANWRALDRASNRRVATGAVVKADGYGLDAGRVARTLAQAGARQFFVAVAEEGVTLRKALGPGPAINVFSGHMEGDTQAIAGARLTPMINSAEQLARHFEALPRHPFGIQLDTGMNRLGMEADEWAAVAEFALGQGPKLVMSHLACADEPGHAANAAQLAEFHRLTDGITVPRSLSATGGILLGEAYHFDMTRPGIGLYGGAPFGAAEPVVRLSIPVVQVRAVTAGESVGYGCSWVAQSDGAIATLSAGYADGLIRAMSNRAMLYAGDVACPLAGRVSMDLLTVDVSHLDEVPEALDLLCPAQGVDRLAEAAGTIGYEILTSLGPRYARHYAGGVA</sequence>
<protein>
    <recommendedName>
        <fullName evidence="1">Alanine racemase</fullName>
        <ecNumber evidence="1">5.1.1.1</ecNumber>
    </recommendedName>
</protein>
<comment type="function">
    <text evidence="1">Catalyzes the interconversion of L-alanine and D-alanine. May also act on other amino acids.</text>
</comment>
<comment type="catalytic activity">
    <reaction evidence="1">
        <text>L-alanine = D-alanine</text>
        <dbReference type="Rhea" id="RHEA:20249"/>
        <dbReference type="ChEBI" id="CHEBI:57416"/>
        <dbReference type="ChEBI" id="CHEBI:57972"/>
        <dbReference type="EC" id="5.1.1.1"/>
    </reaction>
</comment>
<comment type="cofactor">
    <cofactor evidence="1">
        <name>pyridoxal 5'-phosphate</name>
        <dbReference type="ChEBI" id="CHEBI:597326"/>
    </cofactor>
</comment>
<comment type="pathway">
    <text evidence="1">Amino-acid biosynthesis; D-alanine biosynthesis; D-alanine from L-alanine: step 1/1.</text>
</comment>
<comment type="similarity">
    <text evidence="1">Belongs to the alanine racemase family.</text>
</comment>
<accession>A8LRT3</accession>
<gene>
    <name type="primary">alr</name>
    <name type="ordered locus">Dshi_2378</name>
</gene>
<evidence type="ECO:0000255" key="1">
    <source>
        <dbReference type="HAMAP-Rule" id="MF_01201"/>
    </source>
</evidence>
<keyword id="KW-0413">Isomerase</keyword>
<keyword id="KW-0663">Pyridoxal phosphate</keyword>
<keyword id="KW-1185">Reference proteome</keyword>
<reference key="1">
    <citation type="journal article" date="2010" name="ISME J.">
        <title>The complete genome sequence of the algal symbiont Dinoroseobacter shibae: a hitchhiker's guide to life in the sea.</title>
        <authorList>
            <person name="Wagner-Dobler I."/>
            <person name="Ballhausen B."/>
            <person name="Berger M."/>
            <person name="Brinkhoff T."/>
            <person name="Buchholz I."/>
            <person name="Bunk B."/>
            <person name="Cypionka H."/>
            <person name="Daniel R."/>
            <person name="Drepper T."/>
            <person name="Gerdts G."/>
            <person name="Hahnke S."/>
            <person name="Han C."/>
            <person name="Jahn D."/>
            <person name="Kalhoefer D."/>
            <person name="Kiss H."/>
            <person name="Klenk H.P."/>
            <person name="Kyrpides N."/>
            <person name="Liebl W."/>
            <person name="Liesegang H."/>
            <person name="Meincke L."/>
            <person name="Pati A."/>
            <person name="Petersen J."/>
            <person name="Piekarski T."/>
            <person name="Pommerenke C."/>
            <person name="Pradella S."/>
            <person name="Pukall R."/>
            <person name="Rabus R."/>
            <person name="Stackebrandt E."/>
            <person name="Thole S."/>
            <person name="Thompson L."/>
            <person name="Tielen P."/>
            <person name="Tomasch J."/>
            <person name="von Jan M."/>
            <person name="Wanphrut N."/>
            <person name="Wichels A."/>
            <person name="Zech H."/>
            <person name="Simon M."/>
        </authorList>
    </citation>
    <scope>NUCLEOTIDE SEQUENCE [LARGE SCALE GENOMIC DNA]</scope>
    <source>
        <strain>DSM 16493 / NCIMB 14021 / DFL 12</strain>
    </source>
</reference>
<proteinExistence type="inferred from homology"/>
<dbReference type="EC" id="5.1.1.1" evidence="1"/>
<dbReference type="EMBL" id="CP000830">
    <property type="protein sequence ID" value="ABV94114.1"/>
    <property type="molecule type" value="Genomic_DNA"/>
</dbReference>
<dbReference type="RefSeq" id="WP_012179045.1">
    <property type="nucleotide sequence ID" value="NC_009952.1"/>
</dbReference>
<dbReference type="SMR" id="A8LRT3"/>
<dbReference type="STRING" id="398580.Dshi_2378"/>
<dbReference type="KEGG" id="dsh:Dshi_2378"/>
<dbReference type="eggNOG" id="COG0787">
    <property type="taxonomic scope" value="Bacteria"/>
</dbReference>
<dbReference type="HOGENOM" id="CLU_028393_1_0_5"/>
<dbReference type="OrthoDB" id="9813814at2"/>
<dbReference type="UniPathway" id="UPA00042">
    <property type="reaction ID" value="UER00497"/>
</dbReference>
<dbReference type="Proteomes" id="UP000006833">
    <property type="component" value="Chromosome"/>
</dbReference>
<dbReference type="GO" id="GO:0005829">
    <property type="term" value="C:cytosol"/>
    <property type="evidence" value="ECO:0007669"/>
    <property type="project" value="TreeGrafter"/>
</dbReference>
<dbReference type="GO" id="GO:0008784">
    <property type="term" value="F:alanine racemase activity"/>
    <property type="evidence" value="ECO:0007669"/>
    <property type="project" value="UniProtKB-UniRule"/>
</dbReference>
<dbReference type="GO" id="GO:0030170">
    <property type="term" value="F:pyridoxal phosphate binding"/>
    <property type="evidence" value="ECO:0007669"/>
    <property type="project" value="UniProtKB-UniRule"/>
</dbReference>
<dbReference type="GO" id="GO:0030632">
    <property type="term" value="P:D-alanine biosynthetic process"/>
    <property type="evidence" value="ECO:0007669"/>
    <property type="project" value="UniProtKB-UniRule"/>
</dbReference>
<dbReference type="CDD" id="cd00430">
    <property type="entry name" value="PLPDE_III_AR"/>
    <property type="match status" value="1"/>
</dbReference>
<dbReference type="Gene3D" id="3.20.20.10">
    <property type="entry name" value="Alanine racemase"/>
    <property type="match status" value="1"/>
</dbReference>
<dbReference type="Gene3D" id="2.40.37.10">
    <property type="entry name" value="Lyase, Ornithine Decarboxylase, Chain A, domain 1"/>
    <property type="match status" value="1"/>
</dbReference>
<dbReference type="HAMAP" id="MF_01201">
    <property type="entry name" value="Ala_racemase"/>
    <property type="match status" value="1"/>
</dbReference>
<dbReference type="InterPro" id="IPR000821">
    <property type="entry name" value="Ala_racemase"/>
</dbReference>
<dbReference type="InterPro" id="IPR009006">
    <property type="entry name" value="Ala_racemase/Decarboxylase_C"/>
</dbReference>
<dbReference type="InterPro" id="IPR011079">
    <property type="entry name" value="Ala_racemase_C"/>
</dbReference>
<dbReference type="InterPro" id="IPR001608">
    <property type="entry name" value="Ala_racemase_N"/>
</dbReference>
<dbReference type="InterPro" id="IPR020622">
    <property type="entry name" value="Ala_racemase_pyridoxalP-BS"/>
</dbReference>
<dbReference type="InterPro" id="IPR029066">
    <property type="entry name" value="PLP-binding_barrel"/>
</dbReference>
<dbReference type="NCBIfam" id="TIGR00492">
    <property type="entry name" value="alr"/>
    <property type="match status" value="1"/>
</dbReference>
<dbReference type="PANTHER" id="PTHR30511">
    <property type="entry name" value="ALANINE RACEMASE"/>
    <property type="match status" value="1"/>
</dbReference>
<dbReference type="PANTHER" id="PTHR30511:SF0">
    <property type="entry name" value="ALANINE RACEMASE, CATABOLIC-RELATED"/>
    <property type="match status" value="1"/>
</dbReference>
<dbReference type="Pfam" id="PF00842">
    <property type="entry name" value="Ala_racemase_C"/>
    <property type="match status" value="1"/>
</dbReference>
<dbReference type="Pfam" id="PF01168">
    <property type="entry name" value="Ala_racemase_N"/>
    <property type="match status" value="1"/>
</dbReference>
<dbReference type="PRINTS" id="PR00992">
    <property type="entry name" value="ALARACEMASE"/>
</dbReference>
<dbReference type="SMART" id="SM01005">
    <property type="entry name" value="Ala_racemase_C"/>
    <property type="match status" value="1"/>
</dbReference>
<dbReference type="SUPFAM" id="SSF50621">
    <property type="entry name" value="Alanine racemase C-terminal domain-like"/>
    <property type="match status" value="1"/>
</dbReference>
<dbReference type="SUPFAM" id="SSF51419">
    <property type="entry name" value="PLP-binding barrel"/>
    <property type="match status" value="1"/>
</dbReference>
<dbReference type="PROSITE" id="PS00395">
    <property type="entry name" value="ALANINE_RACEMASE"/>
    <property type="match status" value="1"/>
</dbReference>